<keyword id="KW-0002">3D-structure</keyword>
<keyword id="KW-0929">Antimicrobial</keyword>
<keyword id="KW-0903">Direct protein sequencing</keyword>
<keyword id="KW-1015">Disulfide bond</keyword>
<keyword id="KW-0295">Fungicide</keyword>
<keyword id="KW-0960">Knottin</keyword>
<keyword id="KW-0611">Plant defense</keyword>
<keyword id="KW-0964">Secreted</keyword>
<keyword id="KW-0732">Signal</keyword>
<protein>
    <recommendedName>
        <fullName>Antimicrobial peptide 1</fullName>
    </recommendedName>
    <alternativeName>
        <fullName>AFPS-1</fullName>
    </alternativeName>
    <alternativeName>
        <fullName>Anti-fungal protein 1</fullName>
    </alternativeName>
    <alternativeName>
        <fullName>PAFP-S</fullName>
    </alternativeName>
    <alternativeName>
        <fullName>Pa-AMP-1</fullName>
        <shortName>AMP1</shortName>
    </alternativeName>
</protein>
<proteinExistence type="evidence at protein level"/>
<reference key="1">
    <citation type="journal article" date="2000" name="Plant Physiol.">
        <title>Purification, characterization, and molecular cloning of the gene of a seed-specific antimicrobial protein from pokeweed.</title>
        <authorList>
            <person name="Liu Y."/>
            <person name="Luo J."/>
            <person name="Xu C."/>
            <person name="Ren F."/>
            <person name="Peng C."/>
            <person name="Wu G."/>
            <person name="Zhao J."/>
        </authorList>
    </citation>
    <scope>NUCLEOTIDE SEQUENCE</scope>
    <scope>PROTEIN SEQUENCE OF 28-65</scope>
    <scope>TISSUE SPECIFICITY</scope>
    <source>
        <tissue>Seed</tissue>
    </source>
</reference>
<reference key="2">
    <citation type="submission" date="1998-06" db="UniProtKB">
        <authorList>
            <person name="Feng S."/>
        </authorList>
    </citation>
    <scope>PROTEIN SEQUENCE OF 28-65</scope>
    <source>
        <tissue>Seed</tissue>
    </source>
</reference>
<reference key="3">
    <citation type="journal article" date="2001" name="Biochemistry">
        <title>Solution structure of PAFP-S: a new knottin-type antifungal peptide from the seeds of Phytolacca americana.</title>
        <authorList>
            <person name="Gao G.-H."/>
            <person name="Liu W."/>
            <person name="Dai J.-X."/>
            <person name="Wang J.-F."/>
            <person name="Hu Z."/>
            <person name="Zhang Y."/>
            <person name="Wang D.-C."/>
        </authorList>
    </citation>
    <scope>STRUCTURE BY NMR OF 28-65</scope>
</reference>
<organism>
    <name type="scientific">Phytolacca americana</name>
    <name type="common">American pokeweed</name>
    <name type="synonym">Phytolacca decandra</name>
    <dbReference type="NCBI Taxonomy" id="3527"/>
    <lineage>
        <taxon>Eukaryota</taxon>
        <taxon>Viridiplantae</taxon>
        <taxon>Streptophyta</taxon>
        <taxon>Embryophyta</taxon>
        <taxon>Tracheophyta</taxon>
        <taxon>Spermatophyta</taxon>
        <taxon>Magnoliopsida</taxon>
        <taxon>eudicotyledons</taxon>
        <taxon>Gunneridae</taxon>
        <taxon>Pentapetalae</taxon>
        <taxon>Caryophyllales</taxon>
        <taxon>Phytolaccaceae</taxon>
        <taxon>Phytolacca</taxon>
    </lineage>
</organism>
<sequence>MAKVSSAYLKFALVMILLLSVISAVMSAGCIKNGGRCNASAGPPYCCSSYCFQIAGQSYGVCKNR</sequence>
<feature type="signal peptide" evidence="1 2">
    <location>
        <begin position="1"/>
        <end position="27"/>
    </location>
</feature>
<feature type="chain" id="PRO_0000001312" description="Antimicrobial peptide 1">
    <location>
        <begin position="28"/>
        <end position="65"/>
    </location>
</feature>
<feature type="disulfide bond">
    <location>
        <begin position="30"/>
        <end position="47"/>
    </location>
</feature>
<feature type="disulfide bond">
    <location>
        <begin position="37"/>
        <end position="51"/>
    </location>
</feature>
<feature type="disulfide bond">
    <location>
        <begin position="46"/>
        <end position="62"/>
    </location>
</feature>
<feature type="strand" evidence="4">
    <location>
        <begin position="32"/>
        <end position="37"/>
    </location>
</feature>
<feature type="strand" evidence="4">
    <location>
        <begin position="47"/>
        <end position="54"/>
    </location>
</feature>
<feature type="turn" evidence="4">
    <location>
        <begin position="55"/>
        <end position="58"/>
    </location>
</feature>
<feature type="strand" evidence="4">
    <location>
        <begin position="59"/>
        <end position="63"/>
    </location>
</feature>
<evidence type="ECO:0000269" key="1">
    <source>
    </source>
</evidence>
<evidence type="ECO:0000269" key="2">
    <source ref="2"/>
</evidence>
<evidence type="ECO:0000305" key="3"/>
<evidence type="ECO:0007829" key="4">
    <source>
        <dbReference type="PDB" id="1DKC"/>
    </source>
</evidence>
<accession>P81418</accession>
<accession>O82728</accession>
<dbReference type="EMBL" id="AF048745">
    <property type="protein sequence ID" value="AAC05129.1"/>
    <property type="molecule type" value="mRNA"/>
</dbReference>
<dbReference type="EMBL" id="AF105062">
    <property type="protein sequence ID" value="AAD17942.1"/>
    <property type="molecule type" value="Genomic_DNA"/>
</dbReference>
<dbReference type="PDB" id="1DKC">
    <property type="method" value="NMR"/>
    <property type="chains" value="A=28-65"/>
</dbReference>
<dbReference type="PDBsum" id="1DKC"/>
<dbReference type="SMR" id="P81418"/>
<dbReference type="EvolutionaryTrace" id="P81418"/>
<dbReference type="GO" id="GO:0005576">
    <property type="term" value="C:extracellular region"/>
    <property type="evidence" value="ECO:0007669"/>
    <property type="project" value="UniProtKB-SubCell"/>
</dbReference>
<dbReference type="GO" id="GO:0050832">
    <property type="term" value="P:defense response to fungus"/>
    <property type="evidence" value="ECO:0007669"/>
    <property type="project" value="UniProtKB-KW"/>
</dbReference>
<dbReference type="GO" id="GO:0031640">
    <property type="term" value="P:killing of cells of another organism"/>
    <property type="evidence" value="ECO:0007669"/>
    <property type="project" value="UniProtKB-KW"/>
</dbReference>
<dbReference type="InterPro" id="IPR013006">
    <property type="entry name" value="Antimicrobial_C6_CS"/>
</dbReference>
<dbReference type="InterPro" id="IPR009101">
    <property type="entry name" value="Gurmarin/antifun_pep"/>
</dbReference>
<dbReference type="InterPro" id="IPR024206">
    <property type="entry name" value="Gurmarin/antimicrobial_peptd"/>
</dbReference>
<dbReference type="Pfam" id="PF11410">
    <property type="entry name" value="Antifungal_pept"/>
    <property type="match status" value="1"/>
</dbReference>
<dbReference type="SUPFAM" id="SSF57048">
    <property type="entry name" value="Gurmarin-like"/>
    <property type="match status" value="1"/>
</dbReference>
<dbReference type="PROSITE" id="PS60011">
    <property type="entry name" value="PLANT_C6_AMP"/>
    <property type="match status" value="1"/>
</dbReference>
<comment type="function">
    <text>Possesses antifungal activity.</text>
</comment>
<comment type="subcellular location">
    <subcellularLocation>
        <location>Secreted</location>
    </subcellularLocation>
</comment>
<comment type="tissue specificity">
    <text evidence="1">Seed specific.</text>
</comment>
<comment type="domain">
    <text>The presence of a 'disulfide through disulfide knot' structurally defines this protein as a knottin.</text>
</comment>
<comment type="similarity">
    <text evidence="3">Belongs to the AMP family.</text>
</comment>
<name>PAFP_PHYAM</name>